<organism>
    <name type="scientific">Dictyostelium discoideum</name>
    <name type="common">Social amoeba</name>
    <dbReference type="NCBI Taxonomy" id="44689"/>
    <lineage>
        <taxon>Eukaryota</taxon>
        <taxon>Amoebozoa</taxon>
        <taxon>Evosea</taxon>
        <taxon>Eumycetozoa</taxon>
        <taxon>Dictyostelia</taxon>
        <taxon>Dictyosteliales</taxon>
        <taxon>Dictyosteliaceae</taxon>
        <taxon>Dictyostelium</taxon>
    </lineage>
</organism>
<dbReference type="EMBL" id="AAFI02000008">
    <property type="protein sequence ID" value="EAL71133.1"/>
    <property type="molecule type" value="Genomic_DNA"/>
</dbReference>
<dbReference type="RefSeq" id="XP_644917.1">
    <property type="nucleotide sequence ID" value="XM_639825.1"/>
</dbReference>
<dbReference type="SMR" id="Q558Z9"/>
<dbReference type="FunCoup" id="Q558Z9">
    <property type="interactions" value="123"/>
</dbReference>
<dbReference type="STRING" id="44689.Q558Z9"/>
<dbReference type="GlyGen" id="Q558Z9">
    <property type="glycosylation" value="1 site"/>
</dbReference>
<dbReference type="PaxDb" id="44689-DDB0233927"/>
<dbReference type="EnsemblProtists" id="EAL71133">
    <property type="protein sequence ID" value="EAL71133"/>
    <property type="gene ID" value="DDB_G0272991"/>
</dbReference>
<dbReference type="GeneID" id="8618596"/>
<dbReference type="KEGG" id="ddi:DDB_G0272991"/>
<dbReference type="dictyBase" id="DDB_G0272991">
    <property type="gene designation" value="exoc7"/>
</dbReference>
<dbReference type="VEuPathDB" id="AmoebaDB:DDB_G0272991"/>
<dbReference type="eggNOG" id="KOG2344">
    <property type="taxonomic scope" value="Eukaryota"/>
</dbReference>
<dbReference type="HOGENOM" id="CLU_338721_0_0_1"/>
<dbReference type="InParanoid" id="Q558Z9"/>
<dbReference type="OMA" id="NASMKEW"/>
<dbReference type="PhylomeDB" id="Q558Z9"/>
<dbReference type="Reactome" id="R-DDI-264876">
    <property type="pathway name" value="Insulin processing"/>
</dbReference>
<dbReference type="PRO" id="PR:Q558Z9"/>
<dbReference type="Proteomes" id="UP000002195">
    <property type="component" value="Chromosome 2"/>
</dbReference>
<dbReference type="GO" id="GO:0005829">
    <property type="term" value="C:cytosol"/>
    <property type="evidence" value="ECO:0007669"/>
    <property type="project" value="UniProtKB-SubCell"/>
</dbReference>
<dbReference type="GO" id="GO:0000145">
    <property type="term" value="C:exocyst"/>
    <property type="evidence" value="ECO:0000314"/>
    <property type="project" value="dictyBase"/>
</dbReference>
<dbReference type="GO" id="GO:0090543">
    <property type="term" value="C:Flemming body"/>
    <property type="evidence" value="ECO:0007669"/>
    <property type="project" value="UniProtKB-SubCell"/>
</dbReference>
<dbReference type="GO" id="GO:0005886">
    <property type="term" value="C:plasma membrane"/>
    <property type="evidence" value="ECO:0007669"/>
    <property type="project" value="UniProtKB-SubCell"/>
</dbReference>
<dbReference type="GO" id="GO:0005546">
    <property type="term" value="F:phosphatidylinositol-4,5-bisphosphate binding"/>
    <property type="evidence" value="ECO:0007669"/>
    <property type="project" value="InterPro"/>
</dbReference>
<dbReference type="GO" id="GO:0006887">
    <property type="term" value="P:exocytosis"/>
    <property type="evidence" value="ECO:0000318"/>
    <property type="project" value="GO_Central"/>
</dbReference>
<dbReference type="GO" id="GO:0015031">
    <property type="term" value="P:protein transport"/>
    <property type="evidence" value="ECO:0007669"/>
    <property type="project" value="UniProtKB-KW"/>
</dbReference>
<dbReference type="FunFam" id="1.20.1280.170:FF:000010">
    <property type="entry name" value="Exocyst complex component 7"/>
    <property type="match status" value="1"/>
</dbReference>
<dbReference type="Gene3D" id="1.20.1280.170">
    <property type="entry name" value="Exocyst complex component Exo70"/>
    <property type="match status" value="1"/>
</dbReference>
<dbReference type="InterPro" id="IPR016159">
    <property type="entry name" value="Cullin_repeat-like_dom_sf"/>
</dbReference>
<dbReference type="InterPro" id="IPR004140">
    <property type="entry name" value="Exo70"/>
</dbReference>
<dbReference type="InterPro" id="IPR046364">
    <property type="entry name" value="Exo70_C"/>
</dbReference>
<dbReference type="PANTHER" id="PTHR12542:SF41">
    <property type="entry name" value="EXOCYST COMPLEX COMPONENT 7"/>
    <property type="match status" value="1"/>
</dbReference>
<dbReference type="PANTHER" id="PTHR12542">
    <property type="entry name" value="EXOCYST COMPLEX PROTEIN EXO70"/>
    <property type="match status" value="1"/>
</dbReference>
<dbReference type="Pfam" id="PF03081">
    <property type="entry name" value="Exo70_C"/>
    <property type="match status" value="1"/>
</dbReference>
<dbReference type="Pfam" id="PF20669">
    <property type="entry name" value="Exo70_N"/>
    <property type="match status" value="1"/>
</dbReference>
<dbReference type="SUPFAM" id="SSF74788">
    <property type="entry name" value="Cullin repeat-like"/>
    <property type="match status" value="1"/>
</dbReference>
<protein>
    <recommendedName>
        <fullName>Exocyst complex component 7</fullName>
    </recommendedName>
    <alternativeName>
        <fullName>Exocyst complex component Exo70</fullName>
    </alternativeName>
</protein>
<accession>Q558Z9</accession>
<accession>Q86IF4</accession>
<evidence type="ECO:0000250" key="1"/>
<evidence type="ECO:0000250" key="2">
    <source>
        <dbReference type="UniProtKB" id="O35250"/>
    </source>
</evidence>
<evidence type="ECO:0000250" key="3">
    <source>
        <dbReference type="UniProtKB" id="Q9UPT5"/>
    </source>
</evidence>
<evidence type="ECO:0000255" key="4"/>
<evidence type="ECO:0000256" key="5">
    <source>
        <dbReference type="SAM" id="MobiDB-lite"/>
    </source>
</evidence>
<evidence type="ECO:0000305" key="6"/>
<name>EXOC7_DICDI</name>
<gene>
    <name type="primary">exoc7</name>
    <name type="synonym">exo70</name>
    <name type="ORF">DDB_G0272991</name>
</gene>
<comment type="function">
    <text evidence="1">Component of the exocyst complex involved in the docking of exocytic vesicles with fusion sites on the plasma membrane.</text>
</comment>
<comment type="subunit">
    <text evidence="1">The exocyst complex is composed of sec3/exoc1, sec5/exoc2, sec6/exoc3, sec8/exoc4, sec10/exoc5, sec15/exoc6, exo70/exoc7 and exo84/exoc8.</text>
</comment>
<comment type="subcellular location">
    <subcellularLocation>
        <location evidence="2">Cytoplasm</location>
        <location evidence="2">Cytosol</location>
    </subcellularLocation>
    <subcellularLocation>
        <location evidence="2">Cell membrane</location>
        <topology evidence="2">Peripheral membrane protein</topology>
    </subcellularLocation>
    <subcellularLocation>
        <location evidence="3">Midbody</location>
        <location evidence="3">Midbody ring</location>
    </subcellularLocation>
</comment>
<comment type="similarity">
    <text evidence="6">Belongs to the EXO70 family.</text>
</comment>
<reference key="1">
    <citation type="journal article" date="2002" name="Nature">
        <title>Sequence and analysis of chromosome 2 of Dictyostelium discoideum.</title>
        <authorList>
            <person name="Gloeckner G."/>
            <person name="Eichinger L."/>
            <person name="Szafranski K."/>
            <person name="Pachebat J.A."/>
            <person name="Bankier A.T."/>
            <person name="Dear P.H."/>
            <person name="Lehmann R."/>
            <person name="Baumgart C."/>
            <person name="Parra G."/>
            <person name="Abril J.F."/>
            <person name="Guigo R."/>
            <person name="Kumpf K."/>
            <person name="Tunggal B."/>
            <person name="Cox E.C."/>
            <person name="Quail M.A."/>
            <person name="Platzer M."/>
            <person name="Rosenthal A."/>
            <person name="Noegel A.A."/>
        </authorList>
    </citation>
    <scope>NUCLEOTIDE SEQUENCE [LARGE SCALE GENOMIC DNA]</scope>
    <source>
        <strain>AX4</strain>
    </source>
</reference>
<reference key="2">
    <citation type="journal article" date="2005" name="Nature">
        <title>The genome of the social amoeba Dictyostelium discoideum.</title>
        <authorList>
            <person name="Eichinger L."/>
            <person name="Pachebat J.A."/>
            <person name="Gloeckner G."/>
            <person name="Rajandream M.A."/>
            <person name="Sucgang R."/>
            <person name="Berriman M."/>
            <person name="Song J."/>
            <person name="Olsen R."/>
            <person name="Szafranski K."/>
            <person name="Xu Q."/>
            <person name="Tunggal B."/>
            <person name="Kummerfeld S."/>
            <person name="Madera M."/>
            <person name="Konfortov B.A."/>
            <person name="Rivero F."/>
            <person name="Bankier A.T."/>
            <person name="Lehmann R."/>
            <person name="Hamlin N."/>
            <person name="Davies R."/>
            <person name="Gaudet P."/>
            <person name="Fey P."/>
            <person name="Pilcher K."/>
            <person name="Chen G."/>
            <person name="Saunders D."/>
            <person name="Sodergren E.J."/>
            <person name="Davis P."/>
            <person name="Kerhornou A."/>
            <person name="Nie X."/>
            <person name="Hall N."/>
            <person name="Anjard C."/>
            <person name="Hemphill L."/>
            <person name="Bason N."/>
            <person name="Farbrother P."/>
            <person name="Desany B."/>
            <person name="Just E."/>
            <person name="Morio T."/>
            <person name="Rost R."/>
            <person name="Churcher C.M."/>
            <person name="Cooper J."/>
            <person name="Haydock S."/>
            <person name="van Driessche N."/>
            <person name="Cronin A."/>
            <person name="Goodhead I."/>
            <person name="Muzny D.M."/>
            <person name="Mourier T."/>
            <person name="Pain A."/>
            <person name="Lu M."/>
            <person name="Harper D."/>
            <person name="Lindsay R."/>
            <person name="Hauser H."/>
            <person name="James K.D."/>
            <person name="Quiles M."/>
            <person name="Madan Babu M."/>
            <person name="Saito T."/>
            <person name="Buchrieser C."/>
            <person name="Wardroper A."/>
            <person name="Felder M."/>
            <person name="Thangavelu M."/>
            <person name="Johnson D."/>
            <person name="Knights A."/>
            <person name="Loulseged H."/>
            <person name="Mungall K.L."/>
            <person name="Oliver K."/>
            <person name="Price C."/>
            <person name="Quail M.A."/>
            <person name="Urushihara H."/>
            <person name="Hernandez J."/>
            <person name="Rabbinowitsch E."/>
            <person name="Steffen D."/>
            <person name="Sanders M."/>
            <person name="Ma J."/>
            <person name="Kohara Y."/>
            <person name="Sharp S."/>
            <person name="Simmonds M.N."/>
            <person name="Spiegler S."/>
            <person name="Tivey A."/>
            <person name="Sugano S."/>
            <person name="White B."/>
            <person name="Walker D."/>
            <person name="Woodward J.R."/>
            <person name="Winckler T."/>
            <person name="Tanaka Y."/>
            <person name="Shaulsky G."/>
            <person name="Schleicher M."/>
            <person name="Weinstock G.M."/>
            <person name="Rosenthal A."/>
            <person name="Cox E.C."/>
            <person name="Chisholm R.L."/>
            <person name="Gibbs R.A."/>
            <person name="Loomis W.F."/>
            <person name="Platzer M."/>
            <person name="Kay R.R."/>
            <person name="Williams J.G."/>
            <person name="Dear P.H."/>
            <person name="Noegel A.A."/>
            <person name="Barrell B.G."/>
            <person name="Kuspa A."/>
        </authorList>
    </citation>
    <scope>NUCLEOTIDE SEQUENCE [LARGE SCALE GENOMIC DNA]</scope>
    <source>
        <strain>AX4</strain>
    </source>
</reference>
<proteinExistence type="inferred from homology"/>
<feature type="chain" id="PRO_0000329040" description="Exocyst complex component 7">
    <location>
        <begin position="1"/>
        <end position="840"/>
    </location>
</feature>
<feature type="region of interest" description="Disordered" evidence="5">
    <location>
        <begin position="1"/>
        <end position="112"/>
    </location>
</feature>
<feature type="region of interest" description="Disordered" evidence="5">
    <location>
        <begin position="601"/>
        <end position="638"/>
    </location>
</feature>
<feature type="coiled-coil region" evidence="4">
    <location>
        <begin position="193"/>
        <end position="227"/>
    </location>
</feature>
<feature type="compositionally biased region" description="Polar residues" evidence="5">
    <location>
        <begin position="19"/>
        <end position="31"/>
    </location>
</feature>
<feature type="compositionally biased region" description="Low complexity" evidence="5">
    <location>
        <begin position="50"/>
        <end position="73"/>
    </location>
</feature>
<feature type="compositionally biased region" description="Low complexity" evidence="5">
    <location>
        <begin position="83"/>
        <end position="111"/>
    </location>
</feature>
<feature type="compositionally biased region" description="Low complexity" evidence="5">
    <location>
        <begin position="603"/>
        <end position="637"/>
    </location>
</feature>
<sequence>MSAPPRLSARLSVLDQKKSNAPSPTSPTGLKTSLGMPPNSGSSGGGGGLKSSVGISSLPTIPSTKSTSPTLPKRNSANLSLLQQQQQQHTNKSTSPSSNTPTATSTTSPFSYLGKQASAQNLNTMMSMMMLNKNPLSPVVPQPGASLFYATPTEADDEEFEHIRNLLNSEYSVTTVQSTGALKSSNLVVMSWKNNATSELTEQDDQLENDKRDLQFIKEQLEKNNSMSKQMIYILDRFNEGLSQLEMDVAPINASMNEWSSIFNNINSTMEQVKSVLDKFDVDKIDSKINDGAKGDYVSYMLALEHVGNAIDYIAEKSHFKSSDKVMDALKQLKATGLNELETSFKSLLLKISNLVDPTTIAKLPNSKRYLAIILPNHVEEISKYIELFEKLHYNAFLKEYKDKRSKFILLSLRKMAPEKFIKQTSETKNLAYVKGSHPLISYVQETLRLYQIEYDLASELFGNQYQLILDEIIDPAHELLLETTEPIIKVRKTPGDKIFSIFPLLDLFDTFTKLLPDFITAISSRDGKHISELKTQIKHLQDTCASLLDFSLDEEKEISSSNRKEIISDATVDEISSNMINYFKRLIEYKHSVELLLKGQDNNNSNSNSNAPSSTSSNSKSSSSSSSSSSSNSASSTILPTSFIGFLEKILKNLIKYLQGRAKKDFPTQPATDFFKPPIKSVIFQINNYHYISTSLKQSKILSNQQFENNELASANHILHEFETCLDNEIKVLNSFWKTIADILITNKSNKEKDEVKSIIKKHTNFLKTFNDLNKLKFDIPDQELKLKLKTEAKNIIGRSYDQFKELCRLEKIHLEKNFVPFETTDDINRKLDRVFDSQ</sequence>
<keyword id="KW-1003">Cell membrane</keyword>
<keyword id="KW-0175">Coiled coil</keyword>
<keyword id="KW-0963">Cytoplasm</keyword>
<keyword id="KW-0268">Exocytosis</keyword>
<keyword id="KW-0472">Membrane</keyword>
<keyword id="KW-0653">Protein transport</keyword>
<keyword id="KW-1185">Reference proteome</keyword>
<keyword id="KW-0813">Transport</keyword>